<keyword id="KW-0067">ATP-binding</keyword>
<keyword id="KW-0963">Cytoplasm</keyword>
<keyword id="KW-0436">Ligase</keyword>
<keyword id="KW-0547">Nucleotide-binding</keyword>
<keyword id="KW-0566">Pantothenate biosynthesis</keyword>
<keyword id="KW-1185">Reference proteome</keyword>
<evidence type="ECO:0000255" key="1">
    <source>
        <dbReference type="HAMAP-Rule" id="MF_00158"/>
    </source>
</evidence>
<comment type="function">
    <text evidence="1">Catalyzes the condensation of pantoate with beta-alanine in an ATP-dependent reaction via a pantoyl-adenylate intermediate.</text>
</comment>
<comment type="catalytic activity">
    <reaction evidence="1">
        <text>(R)-pantoate + beta-alanine + ATP = (R)-pantothenate + AMP + diphosphate + H(+)</text>
        <dbReference type="Rhea" id="RHEA:10912"/>
        <dbReference type="ChEBI" id="CHEBI:15378"/>
        <dbReference type="ChEBI" id="CHEBI:15980"/>
        <dbReference type="ChEBI" id="CHEBI:29032"/>
        <dbReference type="ChEBI" id="CHEBI:30616"/>
        <dbReference type="ChEBI" id="CHEBI:33019"/>
        <dbReference type="ChEBI" id="CHEBI:57966"/>
        <dbReference type="ChEBI" id="CHEBI:456215"/>
        <dbReference type="EC" id="6.3.2.1"/>
    </reaction>
</comment>
<comment type="pathway">
    <text evidence="1">Cofactor biosynthesis; (R)-pantothenate biosynthesis; (R)-pantothenate from (R)-pantoate and beta-alanine: step 1/1.</text>
</comment>
<comment type="subunit">
    <text evidence="1">Homodimer.</text>
</comment>
<comment type="subcellular location">
    <subcellularLocation>
        <location evidence="1">Cytoplasm</location>
    </subcellularLocation>
</comment>
<comment type="miscellaneous">
    <text evidence="1">The reaction proceeds by a bi uni uni bi ping pong mechanism.</text>
</comment>
<comment type="similarity">
    <text evidence="1">Belongs to the pantothenate synthetase family.</text>
</comment>
<name>PANC2_FRAAA</name>
<proteinExistence type="inferred from homology"/>
<gene>
    <name evidence="1" type="primary">panC2</name>
    <name type="ordered locus">FRAAL5463</name>
</gene>
<protein>
    <recommendedName>
        <fullName evidence="1">Pantothenate synthetase 2</fullName>
        <shortName evidence="1">PS 2</shortName>
        <ecNumber evidence="1">6.3.2.1</ecNumber>
    </recommendedName>
    <alternativeName>
        <fullName evidence="1">Pantoate--beta-alanine ligase 2</fullName>
    </alternativeName>
    <alternativeName>
        <fullName evidence="1">Pantoate-activating enzyme 2</fullName>
    </alternativeName>
</protein>
<reference key="1">
    <citation type="journal article" date="2007" name="Genome Res.">
        <title>Genome characteristics of facultatively symbiotic Frankia sp. strains reflect host range and host plant biogeography.</title>
        <authorList>
            <person name="Normand P."/>
            <person name="Lapierre P."/>
            <person name="Tisa L.S."/>
            <person name="Gogarten J.P."/>
            <person name="Alloisio N."/>
            <person name="Bagnarol E."/>
            <person name="Bassi C.A."/>
            <person name="Berry A.M."/>
            <person name="Bickhart D.M."/>
            <person name="Choisne N."/>
            <person name="Couloux A."/>
            <person name="Cournoyer B."/>
            <person name="Cruveiller S."/>
            <person name="Daubin V."/>
            <person name="Demange N."/>
            <person name="Francino M.P."/>
            <person name="Goltsman E."/>
            <person name="Huang Y."/>
            <person name="Kopp O.R."/>
            <person name="Labarre L."/>
            <person name="Lapidus A."/>
            <person name="Lavire C."/>
            <person name="Marechal J."/>
            <person name="Martinez M."/>
            <person name="Mastronunzio J.E."/>
            <person name="Mullin B.C."/>
            <person name="Niemann J."/>
            <person name="Pujic P."/>
            <person name="Rawnsley T."/>
            <person name="Rouy Z."/>
            <person name="Schenowitz C."/>
            <person name="Sellstedt A."/>
            <person name="Tavares F."/>
            <person name="Tomkins J.P."/>
            <person name="Vallenet D."/>
            <person name="Valverde C."/>
            <person name="Wall L.G."/>
            <person name="Wang Y."/>
            <person name="Medigue C."/>
            <person name="Benson D.R."/>
        </authorList>
    </citation>
    <scope>NUCLEOTIDE SEQUENCE [LARGE SCALE GENOMIC DNA]</scope>
    <source>
        <strain>DSM 45986 / CECT 9034 / ACN14a</strain>
    </source>
</reference>
<sequence length="330" mass="34091">MSGNGGGIGTGLGSLAGSGRTVTTIAEVRAAADAVRAAGGRVGFFGTSGALHEGHLTVIRRMAAECDLSIMPLFLAPVPGVTSDAVPAYDRDFDADAALAFDAGVNLVFRPAVAEMYPALPVRTAVVPADELAAPWEGAEDPSFLRMAATALAKYYNIVGPCRAYTGEKDWVPLTVLRRMVVDLSIRAEIVACPVVRLADGLCASSRNSRLSAADRAAAPTLYAALTAAVAAVEAGERDAEAIRSLLRRRISAVAPVDYAEVVDATTLARVDPLAGELRLLVSADFTGTHLFDNVGLTVRDADADADARVTVPAVGTTAAAPATDRRTSG</sequence>
<feature type="chain" id="PRO_0000305454" description="Pantothenate synthetase 2">
    <location>
        <begin position="1"/>
        <end position="330"/>
    </location>
</feature>
<feature type="active site" description="Proton donor" evidence="1">
    <location>
        <position position="55"/>
    </location>
</feature>
<feature type="binding site" evidence="1">
    <location>
        <begin position="167"/>
        <end position="170"/>
    </location>
    <ligand>
        <name>ATP</name>
        <dbReference type="ChEBI" id="CHEBI:30616"/>
    </ligand>
</feature>
<feature type="binding site" evidence="1">
    <location>
        <position position="196"/>
    </location>
    <ligand>
        <name>ATP</name>
        <dbReference type="ChEBI" id="CHEBI:30616"/>
    </ligand>
</feature>
<feature type="binding site" evidence="1">
    <location>
        <begin position="204"/>
        <end position="207"/>
    </location>
    <ligand>
        <name>ATP</name>
        <dbReference type="ChEBI" id="CHEBI:30616"/>
    </ligand>
</feature>
<organism>
    <name type="scientific">Frankia alni (strain DSM 45986 / CECT 9034 / ACN14a)</name>
    <dbReference type="NCBI Taxonomy" id="326424"/>
    <lineage>
        <taxon>Bacteria</taxon>
        <taxon>Bacillati</taxon>
        <taxon>Actinomycetota</taxon>
        <taxon>Actinomycetes</taxon>
        <taxon>Frankiales</taxon>
        <taxon>Frankiaceae</taxon>
        <taxon>Frankia</taxon>
    </lineage>
</organism>
<dbReference type="EC" id="6.3.2.1" evidence="1"/>
<dbReference type="EMBL" id="CT573213">
    <property type="protein sequence ID" value="CAJ64096.1"/>
    <property type="molecule type" value="Genomic_DNA"/>
</dbReference>
<dbReference type="RefSeq" id="WP_011606544.1">
    <property type="nucleotide sequence ID" value="NC_008278.1"/>
</dbReference>
<dbReference type="SMR" id="Q0REL2"/>
<dbReference type="STRING" id="326424.FRAAL5463"/>
<dbReference type="KEGG" id="fal:FRAAL5463"/>
<dbReference type="eggNOG" id="COG0414">
    <property type="taxonomic scope" value="Bacteria"/>
</dbReference>
<dbReference type="HOGENOM" id="CLU_047148_0_0_11"/>
<dbReference type="OrthoDB" id="3217573at2"/>
<dbReference type="UniPathway" id="UPA00028">
    <property type="reaction ID" value="UER00005"/>
</dbReference>
<dbReference type="Proteomes" id="UP000000657">
    <property type="component" value="Chromosome"/>
</dbReference>
<dbReference type="GO" id="GO:0005829">
    <property type="term" value="C:cytosol"/>
    <property type="evidence" value="ECO:0007669"/>
    <property type="project" value="TreeGrafter"/>
</dbReference>
<dbReference type="GO" id="GO:0005524">
    <property type="term" value="F:ATP binding"/>
    <property type="evidence" value="ECO:0007669"/>
    <property type="project" value="UniProtKB-KW"/>
</dbReference>
<dbReference type="GO" id="GO:0004592">
    <property type="term" value="F:pantoate-beta-alanine ligase activity"/>
    <property type="evidence" value="ECO:0007669"/>
    <property type="project" value="UniProtKB-UniRule"/>
</dbReference>
<dbReference type="GO" id="GO:0015940">
    <property type="term" value="P:pantothenate biosynthetic process"/>
    <property type="evidence" value="ECO:0007669"/>
    <property type="project" value="UniProtKB-UniRule"/>
</dbReference>
<dbReference type="Gene3D" id="3.40.50.620">
    <property type="entry name" value="HUPs"/>
    <property type="match status" value="1"/>
</dbReference>
<dbReference type="Gene3D" id="3.30.1300.10">
    <property type="entry name" value="Pantoate-beta-alanine ligase, C-terminal domain"/>
    <property type="match status" value="1"/>
</dbReference>
<dbReference type="HAMAP" id="MF_00158">
    <property type="entry name" value="PanC"/>
    <property type="match status" value="1"/>
</dbReference>
<dbReference type="InterPro" id="IPR003721">
    <property type="entry name" value="Pantoate_ligase"/>
</dbReference>
<dbReference type="InterPro" id="IPR042176">
    <property type="entry name" value="Pantoate_ligase_C"/>
</dbReference>
<dbReference type="InterPro" id="IPR014729">
    <property type="entry name" value="Rossmann-like_a/b/a_fold"/>
</dbReference>
<dbReference type="PANTHER" id="PTHR21299">
    <property type="entry name" value="CYTIDYLATE KINASE/PANTOATE-BETA-ALANINE LIGASE"/>
    <property type="match status" value="1"/>
</dbReference>
<dbReference type="PANTHER" id="PTHR21299:SF1">
    <property type="entry name" value="PANTOATE--BETA-ALANINE LIGASE"/>
    <property type="match status" value="1"/>
</dbReference>
<dbReference type="Pfam" id="PF02569">
    <property type="entry name" value="Pantoate_ligase"/>
    <property type="match status" value="1"/>
</dbReference>
<dbReference type="SUPFAM" id="SSF52374">
    <property type="entry name" value="Nucleotidylyl transferase"/>
    <property type="match status" value="1"/>
</dbReference>
<accession>Q0REL2</accession>